<name>ARGR_STAAC</name>
<evidence type="ECO:0000255" key="1">
    <source>
        <dbReference type="HAMAP-Rule" id="MF_00173"/>
    </source>
</evidence>
<organism>
    <name type="scientific">Staphylococcus aureus (strain COL)</name>
    <dbReference type="NCBI Taxonomy" id="93062"/>
    <lineage>
        <taxon>Bacteria</taxon>
        <taxon>Bacillati</taxon>
        <taxon>Bacillota</taxon>
        <taxon>Bacilli</taxon>
        <taxon>Bacillales</taxon>
        <taxon>Staphylococcaceae</taxon>
        <taxon>Staphylococcus</taxon>
    </lineage>
</organism>
<proteinExistence type="inferred from homology"/>
<keyword id="KW-0028">Amino-acid biosynthesis</keyword>
<keyword id="KW-0055">Arginine biosynthesis</keyword>
<keyword id="KW-0963">Cytoplasm</keyword>
<keyword id="KW-0238">DNA-binding</keyword>
<keyword id="KW-0678">Repressor</keyword>
<keyword id="KW-0804">Transcription</keyword>
<keyword id="KW-0805">Transcription regulation</keyword>
<gene>
    <name evidence="1" type="primary">argR</name>
    <name type="ordered locus">SACOL1565</name>
</gene>
<feature type="chain" id="PRO_0000205114" description="Arginine repressor">
    <location>
        <begin position="1"/>
        <end position="150"/>
    </location>
</feature>
<accession>Q5HFQ1</accession>
<dbReference type="EMBL" id="CP000046">
    <property type="protein sequence ID" value="AAW36757.1"/>
    <property type="molecule type" value="Genomic_DNA"/>
</dbReference>
<dbReference type="RefSeq" id="WP_001124985.1">
    <property type="nucleotide sequence ID" value="NZ_JBGOFO010000003.1"/>
</dbReference>
<dbReference type="SMR" id="Q5HFQ1"/>
<dbReference type="GeneID" id="98345891"/>
<dbReference type="KEGG" id="sac:SACOL1565"/>
<dbReference type="HOGENOM" id="CLU_097103_3_0_9"/>
<dbReference type="UniPathway" id="UPA00068"/>
<dbReference type="Proteomes" id="UP000000530">
    <property type="component" value="Chromosome"/>
</dbReference>
<dbReference type="GO" id="GO:0005737">
    <property type="term" value="C:cytoplasm"/>
    <property type="evidence" value="ECO:0007669"/>
    <property type="project" value="UniProtKB-SubCell"/>
</dbReference>
<dbReference type="GO" id="GO:0034618">
    <property type="term" value="F:arginine binding"/>
    <property type="evidence" value="ECO:0007669"/>
    <property type="project" value="InterPro"/>
</dbReference>
<dbReference type="GO" id="GO:0003677">
    <property type="term" value="F:DNA binding"/>
    <property type="evidence" value="ECO:0007669"/>
    <property type="project" value="UniProtKB-KW"/>
</dbReference>
<dbReference type="GO" id="GO:0003700">
    <property type="term" value="F:DNA-binding transcription factor activity"/>
    <property type="evidence" value="ECO:0007669"/>
    <property type="project" value="UniProtKB-UniRule"/>
</dbReference>
<dbReference type="GO" id="GO:0006526">
    <property type="term" value="P:L-arginine biosynthetic process"/>
    <property type="evidence" value="ECO:0007669"/>
    <property type="project" value="UniProtKB-UniPathway"/>
</dbReference>
<dbReference type="GO" id="GO:0051259">
    <property type="term" value="P:protein complex oligomerization"/>
    <property type="evidence" value="ECO:0007669"/>
    <property type="project" value="InterPro"/>
</dbReference>
<dbReference type="GO" id="GO:1900079">
    <property type="term" value="P:regulation of arginine biosynthetic process"/>
    <property type="evidence" value="ECO:0007669"/>
    <property type="project" value="UniProtKB-UniRule"/>
</dbReference>
<dbReference type="Gene3D" id="3.30.1360.40">
    <property type="match status" value="1"/>
</dbReference>
<dbReference type="Gene3D" id="1.10.10.10">
    <property type="entry name" value="Winged helix-like DNA-binding domain superfamily/Winged helix DNA-binding domain"/>
    <property type="match status" value="1"/>
</dbReference>
<dbReference type="HAMAP" id="MF_00173">
    <property type="entry name" value="Arg_repressor"/>
    <property type="match status" value="1"/>
</dbReference>
<dbReference type="InterPro" id="IPR001669">
    <property type="entry name" value="Arg_repress"/>
</dbReference>
<dbReference type="InterPro" id="IPR020899">
    <property type="entry name" value="Arg_repress_C"/>
</dbReference>
<dbReference type="InterPro" id="IPR036251">
    <property type="entry name" value="Arg_repress_C_sf"/>
</dbReference>
<dbReference type="InterPro" id="IPR020900">
    <property type="entry name" value="Arg_repress_DNA-bd"/>
</dbReference>
<dbReference type="InterPro" id="IPR036388">
    <property type="entry name" value="WH-like_DNA-bd_sf"/>
</dbReference>
<dbReference type="InterPro" id="IPR036390">
    <property type="entry name" value="WH_DNA-bd_sf"/>
</dbReference>
<dbReference type="NCBIfam" id="TIGR01529">
    <property type="entry name" value="argR_whole"/>
    <property type="match status" value="1"/>
</dbReference>
<dbReference type="NCBIfam" id="NF003281">
    <property type="entry name" value="PRK04280.1"/>
    <property type="match status" value="1"/>
</dbReference>
<dbReference type="PANTHER" id="PTHR34471">
    <property type="entry name" value="ARGININE REPRESSOR"/>
    <property type="match status" value="1"/>
</dbReference>
<dbReference type="PANTHER" id="PTHR34471:SF1">
    <property type="entry name" value="ARGININE REPRESSOR"/>
    <property type="match status" value="1"/>
</dbReference>
<dbReference type="Pfam" id="PF01316">
    <property type="entry name" value="Arg_repressor"/>
    <property type="match status" value="1"/>
</dbReference>
<dbReference type="Pfam" id="PF02863">
    <property type="entry name" value="Arg_repressor_C"/>
    <property type="match status" value="1"/>
</dbReference>
<dbReference type="PRINTS" id="PR01467">
    <property type="entry name" value="ARGREPRESSOR"/>
</dbReference>
<dbReference type="SUPFAM" id="SSF55252">
    <property type="entry name" value="C-terminal domain of arginine repressor"/>
    <property type="match status" value="1"/>
</dbReference>
<dbReference type="SUPFAM" id="SSF46785">
    <property type="entry name" value="Winged helix' DNA-binding domain"/>
    <property type="match status" value="1"/>
</dbReference>
<reference key="1">
    <citation type="journal article" date="2005" name="J. Bacteriol.">
        <title>Insights on evolution of virulence and resistance from the complete genome analysis of an early methicillin-resistant Staphylococcus aureus strain and a biofilm-producing methicillin-resistant Staphylococcus epidermidis strain.</title>
        <authorList>
            <person name="Gill S.R."/>
            <person name="Fouts D.E."/>
            <person name="Archer G.L."/>
            <person name="Mongodin E.F."/>
            <person name="DeBoy R.T."/>
            <person name="Ravel J."/>
            <person name="Paulsen I.T."/>
            <person name="Kolonay J.F."/>
            <person name="Brinkac L.M."/>
            <person name="Beanan M.J."/>
            <person name="Dodson R.J."/>
            <person name="Daugherty S.C."/>
            <person name="Madupu R."/>
            <person name="Angiuoli S.V."/>
            <person name="Durkin A.S."/>
            <person name="Haft D.H."/>
            <person name="Vamathevan J.J."/>
            <person name="Khouri H."/>
            <person name="Utterback T.R."/>
            <person name="Lee C."/>
            <person name="Dimitrov G."/>
            <person name="Jiang L."/>
            <person name="Qin H."/>
            <person name="Weidman J."/>
            <person name="Tran K."/>
            <person name="Kang K.H."/>
            <person name="Hance I.R."/>
            <person name="Nelson K.E."/>
            <person name="Fraser C.M."/>
        </authorList>
    </citation>
    <scope>NUCLEOTIDE SEQUENCE [LARGE SCALE GENOMIC DNA]</scope>
    <source>
        <strain>COL</strain>
    </source>
</reference>
<sequence length="150" mass="17098">MPKKSVRHIKIREIISNEQIETQDELVKRLNDYDLNVTQATVSRDIKELQLIKVPIPSGQYVYSLPNDRKFHPLEKLGRYLMDSFVNIDGTDNLLVLKTLPGNAQSIGAILDQINWEEVLGTICGDDTCLIICRSKEASDEIKSRIFNLL</sequence>
<protein>
    <recommendedName>
        <fullName evidence="1">Arginine repressor</fullName>
    </recommendedName>
</protein>
<comment type="function">
    <text evidence="1">Regulates arginine biosynthesis genes.</text>
</comment>
<comment type="pathway">
    <text>Amino-acid biosynthesis; L-arginine biosynthesis [regulation].</text>
</comment>
<comment type="subcellular location">
    <subcellularLocation>
        <location evidence="1">Cytoplasm</location>
    </subcellularLocation>
</comment>
<comment type="similarity">
    <text evidence="1">Belongs to the ArgR family.</text>
</comment>